<name>PURA_ALIF1</name>
<reference key="1">
    <citation type="journal article" date="2005" name="Proc. Natl. Acad. Sci. U.S.A.">
        <title>Complete genome sequence of Vibrio fischeri: a symbiotic bacterium with pathogenic congeners.</title>
        <authorList>
            <person name="Ruby E.G."/>
            <person name="Urbanowski M."/>
            <person name="Campbell J."/>
            <person name="Dunn A."/>
            <person name="Faini M."/>
            <person name="Gunsalus R."/>
            <person name="Lostroh P."/>
            <person name="Lupp C."/>
            <person name="McCann J."/>
            <person name="Millikan D."/>
            <person name="Schaefer A."/>
            <person name="Stabb E."/>
            <person name="Stevens A."/>
            <person name="Visick K."/>
            <person name="Whistler C."/>
            <person name="Greenberg E.P."/>
        </authorList>
    </citation>
    <scope>NUCLEOTIDE SEQUENCE [LARGE SCALE GENOMIC DNA]</scope>
    <source>
        <strain>ATCC 700601 / ES114</strain>
    </source>
</reference>
<organism>
    <name type="scientific">Aliivibrio fischeri (strain ATCC 700601 / ES114)</name>
    <name type="common">Vibrio fischeri</name>
    <dbReference type="NCBI Taxonomy" id="312309"/>
    <lineage>
        <taxon>Bacteria</taxon>
        <taxon>Pseudomonadati</taxon>
        <taxon>Pseudomonadota</taxon>
        <taxon>Gammaproteobacteria</taxon>
        <taxon>Vibrionales</taxon>
        <taxon>Vibrionaceae</taxon>
        <taxon>Aliivibrio</taxon>
    </lineage>
</organism>
<evidence type="ECO:0000255" key="1">
    <source>
        <dbReference type="HAMAP-Rule" id="MF_00011"/>
    </source>
</evidence>
<comment type="function">
    <text evidence="1">Plays an important role in the de novo pathway of purine nucleotide biosynthesis. Catalyzes the first committed step in the biosynthesis of AMP from IMP.</text>
</comment>
<comment type="catalytic activity">
    <reaction evidence="1">
        <text>IMP + L-aspartate + GTP = N(6)-(1,2-dicarboxyethyl)-AMP + GDP + phosphate + 2 H(+)</text>
        <dbReference type="Rhea" id="RHEA:15753"/>
        <dbReference type="ChEBI" id="CHEBI:15378"/>
        <dbReference type="ChEBI" id="CHEBI:29991"/>
        <dbReference type="ChEBI" id="CHEBI:37565"/>
        <dbReference type="ChEBI" id="CHEBI:43474"/>
        <dbReference type="ChEBI" id="CHEBI:57567"/>
        <dbReference type="ChEBI" id="CHEBI:58053"/>
        <dbReference type="ChEBI" id="CHEBI:58189"/>
        <dbReference type="EC" id="6.3.4.4"/>
    </reaction>
</comment>
<comment type="cofactor">
    <cofactor evidence="1">
        <name>Mg(2+)</name>
        <dbReference type="ChEBI" id="CHEBI:18420"/>
    </cofactor>
    <text evidence="1">Binds 1 Mg(2+) ion per subunit.</text>
</comment>
<comment type="pathway">
    <text evidence="1">Purine metabolism; AMP biosynthesis via de novo pathway; AMP from IMP: step 1/2.</text>
</comment>
<comment type="subunit">
    <text evidence="1">Homodimer.</text>
</comment>
<comment type="subcellular location">
    <subcellularLocation>
        <location evidence="1">Cytoplasm</location>
    </subcellularLocation>
</comment>
<comment type="similarity">
    <text evidence="1">Belongs to the adenylosuccinate synthetase family.</text>
</comment>
<keyword id="KW-0963">Cytoplasm</keyword>
<keyword id="KW-0342">GTP-binding</keyword>
<keyword id="KW-0436">Ligase</keyword>
<keyword id="KW-0460">Magnesium</keyword>
<keyword id="KW-0479">Metal-binding</keyword>
<keyword id="KW-0547">Nucleotide-binding</keyword>
<keyword id="KW-0658">Purine biosynthesis</keyword>
<keyword id="KW-1185">Reference proteome</keyword>
<dbReference type="EC" id="6.3.4.4" evidence="1"/>
<dbReference type="EMBL" id="CP000020">
    <property type="protein sequence ID" value="AAW86813.1"/>
    <property type="molecule type" value="Genomic_DNA"/>
</dbReference>
<dbReference type="RefSeq" id="WP_005421150.1">
    <property type="nucleotide sequence ID" value="NZ_CAWLES010000001.1"/>
</dbReference>
<dbReference type="RefSeq" id="YP_205701.1">
    <property type="nucleotide sequence ID" value="NC_006840.2"/>
</dbReference>
<dbReference type="SMR" id="Q5E2D3"/>
<dbReference type="STRING" id="312309.VF_2318"/>
<dbReference type="EnsemblBacteria" id="AAW86813">
    <property type="protein sequence ID" value="AAW86813"/>
    <property type="gene ID" value="VF_2318"/>
</dbReference>
<dbReference type="GeneID" id="54165034"/>
<dbReference type="KEGG" id="vfi:VF_2318"/>
<dbReference type="PATRIC" id="fig|312309.11.peg.2357"/>
<dbReference type="eggNOG" id="COG0104">
    <property type="taxonomic scope" value="Bacteria"/>
</dbReference>
<dbReference type="HOGENOM" id="CLU_029848_0_0_6"/>
<dbReference type="OrthoDB" id="9807553at2"/>
<dbReference type="UniPathway" id="UPA00075">
    <property type="reaction ID" value="UER00335"/>
</dbReference>
<dbReference type="Proteomes" id="UP000000537">
    <property type="component" value="Chromosome I"/>
</dbReference>
<dbReference type="GO" id="GO:0005737">
    <property type="term" value="C:cytoplasm"/>
    <property type="evidence" value="ECO:0007669"/>
    <property type="project" value="UniProtKB-SubCell"/>
</dbReference>
<dbReference type="GO" id="GO:0004019">
    <property type="term" value="F:adenylosuccinate synthase activity"/>
    <property type="evidence" value="ECO:0007669"/>
    <property type="project" value="UniProtKB-UniRule"/>
</dbReference>
<dbReference type="GO" id="GO:0005525">
    <property type="term" value="F:GTP binding"/>
    <property type="evidence" value="ECO:0007669"/>
    <property type="project" value="UniProtKB-UniRule"/>
</dbReference>
<dbReference type="GO" id="GO:0000287">
    <property type="term" value="F:magnesium ion binding"/>
    <property type="evidence" value="ECO:0007669"/>
    <property type="project" value="UniProtKB-UniRule"/>
</dbReference>
<dbReference type="GO" id="GO:0044208">
    <property type="term" value="P:'de novo' AMP biosynthetic process"/>
    <property type="evidence" value="ECO:0007669"/>
    <property type="project" value="UniProtKB-UniRule"/>
</dbReference>
<dbReference type="GO" id="GO:0046040">
    <property type="term" value="P:IMP metabolic process"/>
    <property type="evidence" value="ECO:0007669"/>
    <property type="project" value="TreeGrafter"/>
</dbReference>
<dbReference type="CDD" id="cd03108">
    <property type="entry name" value="AdSS"/>
    <property type="match status" value="1"/>
</dbReference>
<dbReference type="FunFam" id="1.10.300.10:FF:000001">
    <property type="entry name" value="Adenylosuccinate synthetase"/>
    <property type="match status" value="1"/>
</dbReference>
<dbReference type="FunFam" id="3.90.170.10:FF:000001">
    <property type="entry name" value="Adenylosuccinate synthetase"/>
    <property type="match status" value="1"/>
</dbReference>
<dbReference type="Gene3D" id="3.40.440.10">
    <property type="entry name" value="Adenylosuccinate Synthetase, subunit A, domain 1"/>
    <property type="match status" value="1"/>
</dbReference>
<dbReference type="Gene3D" id="1.10.300.10">
    <property type="entry name" value="Adenylosuccinate Synthetase, subunit A, domain 2"/>
    <property type="match status" value="1"/>
</dbReference>
<dbReference type="Gene3D" id="3.90.170.10">
    <property type="entry name" value="Adenylosuccinate Synthetase, subunit A, domain 3"/>
    <property type="match status" value="1"/>
</dbReference>
<dbReference type="HAMAP" id="MF_00011">
    <property type="entry name" value="Adenylosucc_synth"/>
    <property type="match status" value="1"/>
</dbReference>
<dbReference type="InterPro" id="IPR018220">
    <property type="entry name" value="Adenylosuccin_syn_GTP-bd"/>
</dbReference>
<dbReference type="InterPro" id="IPR033128">
    <property type="entry name" value="Adenylosuccin_syn_Lys_AS"/>
</dbReference>
<dbReference type="InterPro" id="IPR042109">
    <property type="entry name" value="Adenylosuccinate_synth_dom1"/>
</dbReference>
<dbReference type="InterPro" id="IPR042110">
    <property type="entry name" value="Adenylosuccinate_synth_dom2"/>
</dbReference>
<dbReference type="InterPro" id="IPR042111">
    <property type="entry name" value="Adenylosuccinate_synth_dom3"/>
</dbReference>
<dbReference type="InterPro" id="IPR001114">
    <property type="entry name" value="Adenylosuccinate_synthetase"/>
</dbReference>
<dbReference type="InterPro" id="IPR027417">
    <property type="entry name" value="P-loop_NTPase"/>
</dbReference>
<dbReference type="NCBIfam" id="NF002223">
    <property type="entry name" value="PRK01117.1"/>
    <property type="match status" value="1"/>
</dbReference>
<dbReference type="NCBIfam" id="TIGR00184">
    <property type="entry name" value="purA"/>
    <property type="match status" value="1"/>
</dbReference>
<dbReference type="PANTHER" id="PTHR11846">
    <property type="entry name" value="ADENYLOSUCCINATE SYNTHETASE"/>
    <property type="match status" value="1"/>
</dbReference>
<dbReference type="PANTHER" id="PTHR11846:SF0">
    <property type="entry name" value="ADENYLOSUCCINATE SYNTHETASE"/>
    <property type="match status" value="1"/>
</dbReference>
<dbReference type="Pfam" id="PF00709">
    <property type="entry name" value="Adenylsucc_synt"/>
    <property type="match status" value="1"/>
</dbReference>
<dbReference type="SMART" id="SM00788">
    <property type="entry name" value="Adenylsucc_synt"/>
    <property type="match status" value="1"/>
</dbReference>
<dbReference type="SUPFAM" id="SSF52540">
    <property type="entry name" value="P-loop containing nucleoside triphosphate hydrolases"/>
    <property type="match status" value="1"/>
</dbReference>
<dbReference type="PROSITE" id="PS01266">
    <property type="entry name" value="ADENYLOSUCCIN_SYN_1"/>
    <property type="match status" value="1"/>
</dbReference>
<dbReference type="PROSITE" id="PS00513">
    <property type="entry name" value="ADENYLOSUCCIN_SYN_2"/>
    <property type="match status" value="1"/>
</dbReference>
<accession>Q5E2D3</accession>
<protein>
    <recommendedName>
        <fullName evidence="1">Adenylosuccinate synthetase</fullName>
        <shortName evidence="1">AMPSase</shortName>
        <shortName evidence="1">AdSS</shortName>
        <ecNumber evidence="1">6.3.4.4</ecNumber>
    </recommendedName>
    <alternativeName>
        <fullName evidence="1">IMP--aspartate ligase</fullName>
    </alternativeName>
</protein>
<gene>
    <name evidence="1" type="primary">purA</name>
    <name type="ordered locus">VF_2318</name>
</gene>
<feature type="chain" id="PRO_0000095254" description="Adenylosuccinate synthetase">
    <location>
        <begin position="1"/>
        <end position="438"/>
    </location>
</feature>
<feature type="active site" description="Proton acceptor" evidence="1">
    <location>
        <position position="14"/>
    </location>
</feature>
<feature type="active site" description="Proton donor" evidence="1">
    <location>
        <position position="42"/>
    </location>
</feature>
<feature type="binding site" evidence="1">
    <location>
        <begin position="13"/>
        <end position="19"/>
    </location>
    <ligand>
        <name>GTP</name>
        <dbReference type="ChEBI" id="CHEBI:37565"/>
    </ligand>
</feature>
<feature type="binding site" description="in other chain" evidence="1">
    <location>
        <begin position="14"/>
        <end position="17"/>
    </location>
    <ligand>
        <name>IMP</name>
        <dbReference type="ChEBI" id="CHEBI:58053"/>
        <note>ligand shared between dimeric partners</note>
    </ligand>
</feature>
<feature type="binding site" evidence="1">
    <location>
        <position position="14"/>
    </location>
    <ligand>
        <name>Mg(2+)</name>
        <dbReference type="ChEBI" id="CHEBI:18420"/>
    </ligand>
</feature>
<feature type="binding site" description="in other chain" evidence="1">
    <location>
        <begin position="39"/>
        <end position="42"/>
    </location>
    <ligand>
        <name>IMP</name>
        <dbReference type="ChEBI" id="CHEBI:58053"/>
        <note>ligand shared between dimeric partners</note>
    </ligand>
</feature>
<feature type="binding site" evidence="1">
    <location>
        <begin position="41"/>
        <end position="43"/>
    </location>
    <ligand>
        <name>GTP</name>
        <dbReference type="ChEBI" id="CHEBI:37565"/>
    </ligand>
</feature>
<feature type="binding site" evidence="1">
    <location>
        <position position="41"/>
    </location>
    <ligand>
        <name>Mg(2+)</name>
        <dbReference type="ChEBI" id="CHEBI:18420"/>
    </ligand>
</feature>
<feature type="binding site" description="in other chain" evidence="1">
    <location>
        <position position="130"/>
    </location>
    <ligand>
        <name>IMP</name>
        <dbReference type="ChEBI" id="CHEBI:58053"/>
        <note>ligand shared between dimeric partners</note>
    </ligand>
</feature>
<feature type="binding site" evidence="1">
    <location>
        <position position="144"/>
    </location>
    <ligand>
        <name>IMP</name>
        <dbReference type="ChEBI" id="CHEBI:58053"/>
        <note>ligand shared between dimeric partners</note>
    </ligand>
</feature>
<feature type="binding site" description="in other chain" evidence="1">
    <location>
        <position position="225"/>
    </location>
    <ligand>
        <name>IMP</name>
        <dbReference type="ChEBI" id="CHEBI:58053"/>
        <note>ligand shared between dimeric partners</note>
    </ligand>
</feature>
<feature type="binding site" description="in other chain" evidence="1">
    <location>
        <position position="240"/>
    </location>
    <ligand>
        <name>IMP</name>
        <dbReference type="ChEBI" id="CHEBI:58053"/>
        <note>ligand shared between dimeric partners</note>
    </ligand>
</feature>
<feature type="binding site" evidence="1">
    <location>
        <begin position="306"/>
        <end position="312"/>
    </location>
    <ligand>
        <name>substrate</name>
    </ligand>
</feature>
<feature type="binding site" description="in other chain" evidence="1">
    <location>
        <position position="310"/>
    </location>
    <ligand>
        <name>IMP</name>
        <dbReference type="ChEBI" id="CHEBI:58053"/>
        <note>ligand shared between dimeric partners</note>
    </ligand>
</feature>
<feature type="binding site" evidence="1">
    <location>
        <position position="312"/>
    </location>
    <ligand>
        <name>GTP</name>
        <dbReference type="ChEBI" id="CHEBI:37565"/>
    </ligand>
</feature>
<feature type="binding site" evidence="1">
    <location>
        <begin position="338"/>
        <end position="340"/>
    </location>
    <ligand>
        <name>GTP</name>
        <dbReference type="ChEBI" id="CHEBI:37565"/>
    </ligand>
</feature>
<feature type="binding site" evidence="1">
    <location>
        <begin position="421"/>
        <end position="423"/>
    </location>
    <ligand>
        <name>GTP</name>
        <dbReference type="ChEBI" id="CHEBI:37565"/>
    </ligand>
</feature>
<sequence length="438" mass="47692">MGNNVVVLGTQWGDEGKGKIVDLLTEDAKYVVRYQGGHNAGHTLVIDGEKTVLHLIPSGILRDNVECIIGNGVVLSPDALLKEMAPLEARGIPVRERLFISEACPLILPYHVALDQAREIARGNKAIGTTGRGIGPAYEDKVSRRGLRVGDLFDKVAFAEKLKEVMEFHNFALVNYYKVEPVSYEEVLEQAMSYADLLTSMVIDVTDTLDAARKRGDKIMFEGAQGTLLDIDHGTYPYVTSSNTTAGGVAAGSGFGPRHLGYILGITKAYCTRVGSGPFPTELYDGLEKQDPIGKHLGTVGHEFGATTGRLRRTGWFDAVAMRRAIQINSLSGMCLTKLDVLDGLEELKICTGYQMKDGSLLEVSPMAAEAFEEATPVYETMPGWSENTFGAKTLEELPQAALNYIKRIEDLTGVPIDIISTGPDRNETIIKVHPFQA</sequence>
<proteinExistence type="inferred from homology"/>